<dbReference type="EMBL" id="CP000802">
    <property type="protein sequence ID" value="ABV04414.1"/>
    <property type="molecule type" value="Genomic_DNA"/>
</dbReference>
<dbReference type="RefSeq" id="WP_000843559.1">
    <property type="nucleotide sequence ID" value="NC_009800.1"/>
</dbReference>
<dbReference type="KEGG" id="ecx:EcHS_A0013"/>
<dbReference type="HOGENOM" id="CLU_158661_0_0_6"/>
<dbReference type="HAMAP" id="MF_01372">
    <property type="entry name" value="UPF0412"/>
    <property type="match status" value="1"/>
</dbReference>
<dbReference type="InterPro" id="IPR020240">
    <property type="entry name" value="UPF0412_YaaI"/>
</dbReference>
<dbReference type="NCBIfam" id="NF007541">
    <property type="entry name" value="PRK10154.1"/>
    <property type="match status" value="1"/>
</dbReference>
<dbReference type="Pfam" id="PF10807">
    <property type="entry name" value="DUF2541"/>
    <property type="match status" value="1"/>
</dbReference>
<feature type="signal peptide" evidence="1">
    <location>
        <begin position="1"/>
        <end position="23"/>
    </location>
</feature>
<feature type="chain" id="PRO_1000068203" description="UPF0412 protein YaaI">
    <location>
        <begin position="24"/>
        <end position="134"/>
    </location>
</feature>
<evidence type="ECO:0000255" key="1">
    <source>
        <dbReference type="HAMAP-Rule" id="MF_01372"/>
    </source>
</evidence>
<name>YAAI_ECOHS</name>
<protein>
    <recommendedName>
        <fullName evidence="1">UPF0412 protein YaaI</fullName>
    </recommendedName>
</protein>
<keyword id="KW-0732">Signal</keyword>
<proteinExistence type="inferred from homology"/>
<accession>A7ZVV5</accession>
<reference key="1">
    <citation type="journal article" date="2008" name="J. Bacteriol.">
        <title>The pangenome structure of Escherichia coli: comparative genomic analysis of E. coli commensal and pathogenic isolates.</title>
        <authorList>
            <person name="Rasko D.A."/>
            <person name="Rosovitz M.J."/>
            <person name="Myers G.S.A."/>
            <person name="Mongodin E.F."/>
            <person name="Fricke W.F."/>
            <person name="Gajer P."/>
            <person name="Crabtree J."/>
            <person name="Sebaihia M."/>
            <person name="Thomson N.R."/>
            <person name="Chaudhuri R."/>
            <person name="Henderson I.R."/>
            <person name="Sperandio V."/>
            <person name="Ravel J."/>
        </authorList>
    </citation>
    <scope>NUCLEOTIDE SEQUENCE [LARGE SCALE GENOMIC DNA]</scope>
    <source>
        <strain>HS</strain>
    </source>
</reference>
<comment type="similarity">
    <text evidence="1">Belongs to the UPF0412 family.</text>
</comment>
<sequence length="134" mass="14510">MKSVFTISASLAISLMLCCTAQANDHKILGVIAMPRNETNDLALKLPVCRIVKRIQLSADHGDLQLSGASVYFKAARSASQSLNIPSEIKEGQTTDWININSDNDNKRCVSKITFSGHTVNSSDMATLKIIGDD</sequence>
<organism>
    <name type="scientific">Escherichia coli O9:H4 (strain HS)</name>
    <dbReference type="NCBI Taxonomy" id="331112"/>
    <lineage>
        <taxon>Bacteria</taxon>
        <taxon>Pseudomonadati</taxon>
        <taxon>Pseudomonadota</taxon>
        <taxon>Gammaproteobacteria</taxon>
        <taxon>Enterobacterales</taxon>
        <taxon>Enterobacteriaceae</taxon>
        <taxon>Escherichia</taxon>
    </lineage>
</organism>
<gene>
    <name evidence="1" type="primary">yaaI</name>
    <name type="ordered locus">EcHS_A0013</name>
</gene>